<accession>Q9MAT2</accession>
<protein>
    <recommendedName>
        <fullName>Pentatricopeptide repeat-containing protein At1g04840</fullName>
    </recommendedName>
</protein>
<evidence type="ECO:0000305" key="1"/>
<reference key="1">
    <citation type="journal article" date="2000" name="Nature">
        <title>Sequence and analysis of chromosome 1 of the plant Arabidopsis thaliana.</title>
        <authorList>
            <person name="Theologis A."/>
            <person name="Ecker J.R."/>
            <person name="Palm C.J."/>
            <person name="Federspiel N.A."/>
            <person name="Kaul S."/>
            <person name="White O."/>
            <person name="Alonso J."/>
            <person name="Altafi H."/>
            <person name="Araujo R."/>
            <person name="Bowman C.L."/>
            <person name="Brooks S.Y."/>
            <person name="Buehler E."/>
            <person name="Chan A."/>
            <person name="Chao Q."/>
            <person name="Chen H."/>
            <person name="Cheuk R.F."/>
            <person name="Chin C.W."/>
            <person name="Chung M.K."/>
            <person name="Conn L."/>
            <person name="Conway A.B."/>
            <person name="Conway A.R."/>
            <person name="Creasy T.H."/>
            <person name="Dewar K."/>
            <person name="Dunn P."/>
            <person name="Etgu P."/>
            <person name="Feldblyum T.V."/>
            <person name="Feng J.-D."/>
            <person name="Fong B."/>
            <person name="Fujii C.Y."/>
            <person name="Gill J.E."/>
            <person name="Goldsmith A.D."/>
            <person name="Haas B."/>
            <person name="Hansen N.F."/>
            <person name="Hughes B."/>
            <person name="Huizar L."/>
            <person name="Hunter J.L."/>
            <person name="Jenkins J."/>
            <person name="Johnson-Hopson C."/>
            <person name="Khan S."/>
            <person name="Khaykin E."/>
            <person name="Kim C.J."/>
            <person name="Koo H.L."/>
            <person name="Kremenetskaia I."/>
            <person name="Kurtz D.B."/>
            <person name="Kwan A."/>
            <person name="Lam B."/>
            <person name="Langin-Hooper S."/>
            <person name="Lee A."/>
            <person name="Lee J.M."/>
            <person name="Lenz C.A."/>
            <person name="Li J.H."/>
            <person name="Li Y.-P."/>
            <person name="Lin X."/>
            <person name="Liu S.X."/>
            <person name="Liu Z.A."/>
            <person name="Luros J.S."/>
            <person name="Maiti R."/>
            <person name="Marziali A."/>
            <person name="Militscher J."/>
            <person name="Miranda M."/>
            <person name="Nguyen M."/>
            <person name="Nierman W.C."/>
            <person name="Osborne B.I."/>
            <person name="Pai G."/>
            <person name="Peterson J."/>
            <person name="Pham P.K."/>
            <person name="Rizzo M."/>
            <person name="Rooney T."/>
            <person name="Rowley D."/>
            <person name="Sakano H."/>
            <person name="Salzberg S.L."/>
            <person name="Schwartz J.R."/>
            <person name="Shinn P."/>
            <person name="Southwick A.M."/>
            <person name="Sun H."/>
            <person name="Tallon L.J."/>
            <person name="Tambunga G."/>
            <person name="Toriumi M.J."/>
            <person name="Town C.D."/>
            <person name="Utterback T."/>
            <person name="Van Aken S."/>
            <person name="Vaysberg M."/>
            <person name="Vysotskaia V.S."/>
            <person name="Walker M."/>
            <person name="Wu D."/>
            <person name="Yu G."/>
            <person name="Fraser C.M."/>
            <person name="Venter J.C."/>
            <person name="Davis R.W."/>
        </authorList>
    </citation>
    <scope>NUCLEOTIDE SEQUENCE [LARGE SCALE GENOMIC DNA]</scope>
    <source>
        <strain>cv. Columbia</strain>
    </source>
</reference>
<reference key="2">
    <citation type="journal article" date="2017" name="Plant J.">
        <title>Araport11: a complete reannotation of the Arabidopsis thaliana reference genome.</title>
        <authorList>
            <person name="Cheng C.Y."/>
            <person name="Krishnakumar V."/>
            <person name="Chan A.P."/>
            <person name="Thibaud-Nissen F."/>
            <person name="Schobel S."/>
            <person name="Town C.D."/>
        </authorList>
    </citation>
    <scope>GENOME REANNOTATION</scope>
    <source>
        <strain>cv. Columbia</strain>
    </source>
</reference>
<reference key="3">
    <citation type="journal article" date="2000" name="Plant Mol. Biol.">
        <title>In Arabidopsis thaliana, 1% of the genome codes for a novel protein family unique to plants.</title>
        <authorList>
            <person name="Aubourg S."/>
            <person name="Boudet N."/>
            <person name="Kreis M."/>
            <person name="Lecharny A."/>
        </authorList>
    </citation>
    <scope>GENE FAMILY</scope>
</reference>
<reference key="4">
    <citation type="journal article" date="2004" name="Plant Cell">
        <title>Genome-wide analysis of Arabidopsis pentatricopeptide repeat proteins reveals their essential role in organelle biogenesis.</title>
        <authorList>
            <person name="Lurin C."/>
            <person name="Andres C."/>
            <person name="Aubourg S."/>
            <person name="Bellaoui M."/>
            <person name="Bitton F."/>
            <person name="Bruyere C."/>
            <person name="Caboche M."/>
            <person name="Debast C."/>
            <person name="Gualberto J."/>
            <person name="Hoffmann B."/>
            <person name="Lecharny A."/>
            <person name="Le Ret M."/>
            <person name="Martin-Magniette M.-L."/>
            <person name="Mireau H."/>
            <person name="Peeters N."/>
            <person name="Renou J.-P."/>
            <person name="Szurek B."/>
            <person name="Taconnat L."/>
            <person name="Small I."/>
        </authorList>
    </citation>
    <scope>GENE FAMILY</scope>
</reference>
<name>PPR10_ARATH</name>
<feature type="chain" id="PRO_0000342751" description="Pentatricopeptide repeat-containing protein At1g04840">
    <location>
        <begin position="1"/>
        <end position="665"/>
    </location>
</feature>
<feature type="repeat" description="PPR 1">
    <location>
        <begin position="90"/>
        <end position="124"/>
    </location>
</feature>
<feature type="repeat" description="PPR 2">
    <location>
        <begin position="125"/>
        <end position="155"/>
    </location>
</feature>
<feature type="repeat" description="PPR 3">
    <location>
        <begin position="160"/>
        <end position="190"/>
    </location>
</feature>
<feature type="repeat" description="PPR 4">
    <location>
        <begin position="195"/>
        <end position="229"/>
    </location>
</feature>
<feature type="repeat" description="PPR 5">
    <location>
        <begin position="230"/>
        <end position="256"/>
    </location>
</feature>
<feature type="repeat" description="PPR 6">
    <location>
        <begin position="257"/>
        <end position="291"/>
    </location>
</feature>
<feature type="repeat" description="PPR 7">
    <location>
        <begin position="292"/>
        <end position="326"/>
    </location>
</feature>
<feature type="repeat" description="PPR 8">
    <location>
        <begin position="327"/>
        <end position="357"/>
    </location>
</feature>
<feature type="repeat" description="PPR 9">
    <location>
        <begin position="358"/>
        <end position="392"/>
    </location>
</feature>
<feature type="repeat" description="PPR 10">
    <location>
        <begin position="393"/>
        <end position="423"/>
    </location>
</feature>
<feature type="repeat" description="PPR 11">
    <location>
        <begin position="429"/>
        <end position="459"/>
    </location>
</feature>
<feature type="region of interest" description="Type E motif">
    <location>
        <begin position="464"/>
        <end position="539"/>
    </location>
</feature>
<feature type="region of interest" description="Type E(+) motif">
    <location>
        <begin position="540"/>
        <end position="570"/>
    </location>
</feature>
<feature type="region of interest" description="Type DYW motif">
    <location>
        <begin position="571"/>
        <end position="665"/>
    </location>
</feature>
<dbReference type="EMBL" id="AC004809">
    <property type="protein sequence ID" value="AAF40466.1"/>
    <property type="molecule type" value="Genomic_DNA"/>
</dbReference>
<dbReference type="EMBL" id="CP002684">
    <property type="protein sequence ID" value="AEE27750.1"/>
    <property type="molecule type" value="Genomic_DNA"/>
</dbReference>
<dbReference type="PIR" id="F86181">
    <property type="entry name" value="F86181"/>
</dbReference>
<dbReference type="RefSeq" id="NP_171976.1">
    <property type="nucleotide sequence ID" value="NM_100362.2"/>
</dbReference>
<dbReference type="SMR" id="Q9MAT2"/>
<dbReference type="FunCoup" id="Q9MAT2">
    <property type="interactions" value="84"/>
</dbReference>
<dbReference type="iPTMnet" id="Q9MAT2"/>
<dbReference type="PaxDb" id="3702-AT1G04840.1"/>
<dbReference type="ProteomicsDB" id="234796"/>
<dbReference type="EnsemblPlants" id="AT1G04840.1">
    <property type="protein sequence ID" value="AT1G04840.1"/>
    <property type="gene ID" value="AT1G04840"/>
</dbReference>
<dbReference type="GeneID" id="839402"/>
<dbReference type="Gramene" id="AT1G04840.1">
    <property type="protein sequence ID" value="AT1G04840.1"/>
    <property type="gene ID" value="AT1G04840"/>
</dbReference>
<dbReference type="KEGG" id="ath:AT1G04840"/>
<dbReference type="Araport" id="AT1G04840"/>
<dbReference type="TAIR" id="AT1G04840"/>
<dbReference type="eggNOG" id="KOG4197">
    <property type="taxonomic scope" value="Eukaryota"/>
</dbReference>
<dbReference type="HOGENOM" id="CLU_002706_37_2_1"/>
<dbReference type="InParanoid" id="Q9MAT2"/>
<dbReference type="OMA" id="QGYMPET"/>
<dbReference type="PhylomeDB" id="Q9MAT2"/>
<dbReference type="PRO" id="PR:Q9MAT2"/>
<dbReference type="Proteomes" id="UP000006548">
    <property type="component" value="Chromosome 1"/>
</dbReference>
<dbReference type="ExpressionAtlas" id="Q9MAT2">
    <property type="expression patterns" value="baseline and differential"/>
</dbReference>
<dbReference type="GO" id="GO:0003723">
    <property type="term" value="F:RNA binding"/>
    <property type="evidence" value="ECO:0007669"/>
    <property type="project" value="InterPro"/>
</dbReference>
<dbReference type="GO" id="GO:0008270">
    <property type="term" value="F:zinc ion binding"/>
    <property type="evidence" value="ECO:0007669"/>
    <property type="project" value="InterPro"/>
</dbReference>
<dbReference type="GO" id="GO:0009451">
    <property type="term" value="P:RNA modification"/>
    <property type="evidence" value="ECO:0007669"/>
    <property type="project" value="InterPro"/>
</dbReference>
<dbReference type="FunFam" id="1.25.40.10:FF:001971">
    <property type="entry name" value="Pentatricopeptide repeat-containing protein At1g04840"/>
    <property type="match status" value="1"/>
</dbReference>
<dbReference type="FunFam" id="1.25.40.10:FF:002172">
    <property type="entry name" value="Pentatricopeptide repeat-containing protein At1g32415, mitochondrial"/>
    <property type="match status" value="1"/>
</dbReference>
<dbReference type="FunFam" id="1.25.40.10:FF:000090">
    <property type="entry name" value="Pentatricopeptide repeat-containing protein, chloroplastic"/>
    <property type="match status" value="1"/>
</dbReference>
<dbReference type="Gene3D" id="1.25.40.10">
    <property type="entry name" value="Tetratricopeptide repeat domain"/>
    <property type="match status" value="4"/>
</dbReference>
<dbReference type="InterPro" id="IPR032867">
    <property type="entry name" value="DYW_dom"/>
</dbReference>
<dbReference type="InterPro" id="IPR002885">
    <property type="entry name" value="Pentatricopeptide_rpt"/>
</dbReference>
<dbReference type="InterPro" id="IPR046960">
    <property type="entry name" value="PPR_At4g14850-like_plant"/>
</dbReference>
<dbReference type="InterPro" id="IPR011990">
    <property type="entry name" value="TPR-like_helical_dom_sf"/>
</dbReference>
<dbReference type="NCBIfam" id="TIGR00756">
    <property type="entry name" value="PPR"/>
    <property type="match status" value="4"/>
</dbReference>
<dbReference type="PANTHER" id="PTHR47926:SF492">
    <property type="entry name" value="DYW DOMAIN-CONTAINING PROTEIN"/>
    <property type="match status" value="1"/>
</dbReference>
<dbReference type="PANTHER" id="PTHR47926">
    <property type="entry name" value="PENTATRICOPEPTIDE REPEAT-CONTAINING PROTEIN"/>
    <property type="match status" value="1"/>
</dbReference>
<dbReference type="Pfam" id="PF14432">
    <property type="entry name" value="DYW_deaminase"/>
    <property type="match status" value="1"/>
</dbReference>
<dbReference type="Pfam" id="PF01535">
    <property type="entry name" value="PPR"/>
    <property type="match status" value="5"/>
</dbReference>
<dbReference type="Pfam" id="PF13041">
    <property type="entry name" value="PPR_2"/>
    <property type="match status" value="1"/>
</dbReference>
<dbReference type="SUPFAM" id="SSF48452">
    <property type="entry name" value="TPR-like"/>
    <property type="match status" value="2"/>
</dbReference>
<dbReference type="PROSITE" id="PS51375">
    <property type="entry name" value="PPR"/>
    <property type="match status" value="11"/>
</dbReference>
<proteinExistence type="evidence at transcript level"/>
<gene>
    <name type="primary">PCMP-H64</name>
    <name type="ordered locus">At1g04840</name>
    <name type="ORF">F13M7.17</name>
</gene>
<comment type="similarity">
    <text evidence="1">Belongs to the PPR family. PCMP-H subfamily.</text>
</comment>
<comment type="online information" name="Pentatricopeptide repeat proteins">
    <link uri="https://ppr.plantenergy.uwa.edu.au"/>
</comment>
<keyword id="KW-1185">Reference proteome</keyword>
<keyword id="KW-0677">Repeat</keyword>
<sequence>MKSLSVIFKPKSSPAKIYFPADRQASPDESHFISLIHACKDTASLRHVHAQILRRGVLSSRVAAQLVSCSSLLKSPDYSLSIFRNSEERNPFVLNALIRGLTENARFESSVRHFILMLRLGVKPDRLTFPFVLKSNSKLGFRWLGRALHAATLKNFVDCDSFVRLSLVDMYAKTGQLKHAFQVFEESPDRIKKESILIWNVLINGYCRAKDMHMATTLFRSMPERNSGSWSTLIKGYVDSGELNRAKQLFELMPEKNVVSWTTLINGFSQTGDYETAISTYFEMLEKGLKPNEYTIAAVLSACSKSGALGSGIRIHGYILDNGIKLDRAIGTALVDMYAKCGELDCAATVFSNMNHKDILSWTAMIQGWAVHGRFHQAIQCFRQMMYSGEKPDEVVFLAVLTACLNSSEVDLGLNFFDSMRLDYAIEPTLKHYVLVVDLLGRAGKLNEAHELVENMPINPDLTTWAALYRACKAHKGYRRAESVSQNLLELDPELCGSYIFLDKTHASKGNIQDVEKRRLSLQKRIKERSLGWSYIELDGQLNKFSAGDYSHKLTQEIGLKLDEIISLAIQKGYNPGADWSIHDIEEEEKENVTGIHSEKLALTLGFLRTAPGTTIRIIKNLRICGDCHSLMKYVSKISQRDILLRDARQFHHFKDGRCSCGDYW</sequence>
<organism>
    <name type="scientific">Arabidopsis thaliana</name>
    <name type="common">Mouse-ear cress</name>
    <dbReference type="NCBI Taxonomy" id="3702"/>
    <lineage>
        <taxon>Eukaryota</taxon>
        <taxon>Viridiplantae</taxon>
        <taxon>Streptophyta</taxon>
        <taxon>Embryophyta</taxon>
        <taxon>Tracheophyta</taxon>
        <taxon>Spermatophyta</taxon>
        <taxon>Magnoliopsida</taxon>
        <taxon>eudicotyledons</taxon>
        <taxon>Gunneridae</taxon>
        <taxon>Pentapetalae</taxon>
        <taxon>rosids</taxon>
        <taxon>malvids</taxon>
        <taxon>Brassicales</taxon>
        <taxon>Brassicaceae</taxon>
        <taxon>Camelineae</taxon>
        <taxon>Arabidopsis</taxon>
    </lineage>
</organism>